<name>Y032_SIFVH</name>
<gene>
    <name type="primary">SIFV0032</name>
</gene>
<protein>
    <recommendedName>
        <fullName>Uncharacterized protein 32</fullName>
    </recommendedName>
</protein>
<organismHost>
    <name type="scientific">Saccharolobus islandicus</name>
    <name type="common">Sulfolobus islandicus</name>
    <dbReference type="NCBI Taxonomy" id="43080"/>
</organismHost>
<keyword id="KW-1185">Reference proteome</keyword>
<sequence length="116" mass="13263">MGEENIELPEGNNKSETEKYIEDLINSIESELPKHVNYTTGIIVDDERNLLIIKNGKLHVGRDENNAKEIKEYVKDANAGYLINALYVLKQMLASYKDLWSGKIEREAKKALNEII</sequence>
<proteinExistence type="predicted"/>
<feature type="chain" id="PRO_0000385440" description="Uncharacterized protein 32">
    <location>
        <begin position="1"/>
        <end position="116"/>
    </location>
</feature>
<reference key="1">
    <citation type="journal article" date="2000" name="Virology">
        <title>A novel lipothrixvirus, SIFV, of the extremely thermophilic crenarchaeon Sulfolobus.</title>
        <authorList>
            <person name="Arnold H.P."/>
            <person name="Zillig W."/>
            <person name="Ziese U."/>
            <person name="Holz I."/>
            <person name="Crosby M."/>
            <person name="Utterback T."/>
            <person name="Weidmann J.F."/>
            <person name="Umayam L.A."/>
            <person name="Teffera K."/>
            <person name="Kristjanson J.K."/>
            <person name="Klenk H.P."/>
            <person name="Nelson K.E."/>
            <person name="Fraser C.M."/>
        </authorList>
    </citation>
    <scope>NUCLEOTIDE SEQUENCE [GENOMIC DNA]</scope>
</reference>
<organism>
    <name type="scientific">Sulfolobus islandicus filamentous virus (isolate Iceland/Hveragerdi)</name>
    <name type="common">SIFV</name>
    <dbReference type="NCBI Taxonomy" id="654908"/>
    <lineage>
        <taxon>Viruses</taxon>
        <taxon>Adnaviria</taxon>
        <taxon>Zilligvirae</taxon>
        <taxon>Taleaviricota</taxon>
        <taxon>Tokiviricetes</taxon>
        <taxon>Ligamenvirales</taxon>
        <taxon>Lipothrixviridae</taxon>
        <taxon>Betalipothrixvirus</taxon>
        <taxon>Sulfolobus islandicus filamentous virus</taxon>
    </lineage>
</organism>
<accession>Q914J8</accession>
<dbReference type="EMBL" id="AF440571">
    <property type="protein sequence ID" value="AAL27743.1"/>
    <property type="molecule type" value="Genomic_DNA"/>
</dbReference>
<dbReference type="RefSeq" id="NP_445697.1">
    <property type="nucleotide sequence ID" value="NC_003214.2"/>
</dbReference>
<dbReference type="SMR" id="Q914J8"/>
<dbReference type="GeneID" id="922288"/>
<dbReference type="KEGG" id="vg:922288"/>
<dbReference type="Proteomes" id="UP000007017">
    <property type="component" value="Segment"/>
</dbReference>